<accession>A1A1B4</accession>
<keyword id="KW-0067">ATP-binding</keyword>
<keyword id="KW-0119">Carbohydrate metabolism</keyword>
<keyword id="KW-0320">Glycogen biosynthesis</keyword>
<keyword id="KW-0321">Glycogen metabolism</keyword>
<keyword id="KW-0547">Nucleotide-binding</keyword>
<keyword id="KW-0548">Nucleotidyltransferase</keyword>
<keyword id="KW-1185">Reference proteome</keyword>
<keyword id="KW-0808">Transferase</keyword>
<organism>
    <name type="scientific">Bifidobacterium adolescentis (strain ATCC 15703 / DSM 20083 / NCTC 11814 / E194a)</name>
    <dbReference type="NCBI Taxonomy" id="367928"/>
    <lineage>
        <taxon>Bacteria</taxon>
        <taxon>Bacillati</taxon>
        <taxon>Actinomycetota</taxon>
        <taxon>Actinomycetes</taxon>
        <taxon>Bifidobacteriales</taxon>
        <taxon>Bifidobacteriaceae</taxon>
        <taxon>Bifidobacterium</taxon>
    </lineage>
</organism>
<comment type="function">
    <text evidence="1">Involved in the biosynthesis of ADP-glucose, a building block required for the elongation reactions to produce glycogen. Catalyzes the reaction between ATP and alpha-D-glucose 1-phosphate (G1P) to produce pyrophosphate and ADP-Glc.</text>
</comment>
<comment type="catalytic activity">
    <reaction evidence="1">
        <text>alpha-D-glucose 1-phosphate + ATP + H(+) = ADP-alpha-D-glucose + diphosphate</text>
        <dbReference type="Rhea" id="RHEA:12120"/>
        <dbReference type="ChEBI" id="CHEBI:15378"/>
        <dbReference type="ChEBI" id="CHEBI:30616"/>
        <dbReference type="ChEBI" id="CHEBI:33019"/>
        <dbReference type="ChEBI" id="CHEBI:57498"/>
        <dbReference type="ChEBI" id="CHEBI:58601"/>
        <dbReference type="EC" id="2.7.7.27"/>
    </reaction>
</comment>
<comment type="pathway">
    <text evidence="1">Glycan biosynthesis; glycogen biosynthesis.</text>
</comment>
<comment type="subunit">
    <text evidence="1">Homotetramer.</text>
</comment>
<comment type="similarity">
    <text evidence="1">Belongs to the bacterial/plant glucose-1-phosphate adenylyltransferase family.</text>
</comment>
<evidence type="ECO:0000255" key="1">
    <source>
        <dbReference type="HAMAP-Rule" id="MF_00624"/>
    </source>
</evidence>
<protein>
    <recommendedName>
        <fullName evidence="1">Glucose-1-phosphate adenylyltransferase</fullName>
        <ecNumber evidence="1">2.7.7.27</ecNumber>
    </recommendedName>
    <alternativeName>
        <fullName evidence="1">ADP-glucose pyrophosphorylase</fullName>
        <shortName evidence="1">ADPGlc PPase</shortName>
    </alternativeName>
    <alternativeName>
        <fullName evidence="1">ADP-glucose synthase</fullName>
    </alternativeName>
</protein>
<feature type="chain" id="PRO_1000051560" description="Glucose-1-phosphate adenylyltransferase">
    <location>
        <begin position="1"/>
        <end position="414"/>
    </location>
</feature>
<feature type="binding site" evidence="1">
    <location>
        <position position="99"/>
    </location>
    <ligand>
        <name>alpha-D-glucose 1-phosphate</name>
        <dbReference type="ChEBI" id="CHEBI:58601"/>
    </ligand>
</feature>
<feature type="binding site" evidence="1">
    <location>
        <position position="164"/>
    </location>
    <ligand>
        <name>alpha-D-glucose 1-phosphate</name>
        <dbReference type="ChEBI" id="CHEBI:58601"/>
    </ligand>
</feature>
<feature type="binding site" evidence="1">
    <location>
        <begin position="181"/>
        <end position="182"/>
    </location>
    <ligand>
        <name>alpha-D-glucose 1-phosphate</name>
        <dbReference type="ChEBI" id="CHEBI:58601"/>
    </ligand>
</feature>
<feature type="binding site" evidence="1">
    <location>
        <position position="199"/>
    </location>
    <ligand>
        <name>alpha-D-glucose 1-phosphate</name>
        <dbReference type="ChEBI" id="CHEBI:58601"/>
    </ligand>
</feature>
<name>GLGC_BIFAA</name>
<reference key="1">
    <citation type="submission" date="2006-12" db="EMBL/GenBank/DDBJ databases">
        <title>Bifidobacterium adolescentis complete genome sequence.</title>
        <authorList>
            <person name="Suzuki T."/>
            <person name="Tsuda Y."/>
            <person name="Kanou N."/>
            <person name="Inoue T."/>
            <person name="Kumazaki K."/>
            <person name="Nagano S."/>
            <person name="Hirai S."/>
            <person name="Tanaka K."/>
            <person name="Watanabe K."/>
        </authorList>
    </citation>
    <scope>NUCLEOTIDE SEQUENCE [LARGE SCALE GENOMIC DNA]</scope>
    <source>
        <strain>ATCC 15703 / DSM 20083 / NCTC 11814 / E194a</strain>
    </source>
</reference>
<dbReference type="EC" id="2.7.7.27" evidence="1"/>
<dbReference type="EMBL" id="AP009256">
    <property type="protein sequence ID" value="BAF39497.1"/>
    <property type="molecule type" value="Genomic_DNA"/>
</dbReference>
<dbReference type="RefSeq" id="WP_003809465.1">
    <property type="nucleotide sequence ID" value="NZ_CAXVNC010000001.1"/>
</dbReference>
<dbReference type="SMR" id="A1A1B4"/>
<dbReference type="STRING" id="367928.BAD_0716"/>
<dbReference type="PaxDb" id="1680-BADO_0762"/>
<dbReference type="GeneID" id="4557708"/>
<dbReference type="KEGG" id="bad:BAD_0716"/>
<dbReference type="HOGENOM" id="CLU_029499_14_1_11"/>
<dbReference type="UniPathway" id="UPA00164"/>
<dbReference type="Proteomes" id="UP000008702">
    <property type="component" value="Chromosome"/>
</dbReference>
<dbReference type="GO" id="GO:0005524">
    <property type="term" value="F:ATP binding"/>
    <property type="evidence" value="ECO:0007669"/>
    <property type="project" value="UniProtKB-KW"/>
</dbReference>
<dbReference type="GO" id="GO:0008878">
    <property type="term" value="F:glucose-1-phosphate adenylyltransferase activity"/>
    <property type="evidence" value="ECO:0007669"/>
    <property type="project" value="UniProtKB-UniRule"/>
</dbReference>
<dbReference type="GO" id="GO:0005978">
    <property type="term" value="P:glycogen biosynthetic process"/>
    <property type="evidence" value="ECO:0007669"/>
    <property type="project" value="UniProtKB-UniRule"/>
</dbReference>
<dbReference type="CDD" id="cd02508">
    <property type="entry name" value="ADP_Glucose_PP"/>
    <property type="match status" value="1"/>
</dbReference>
<dbReference type="CDD" id="cd04651">
    <property type="entry name" value="LbH_G1P_AT_C"/>
    <property type="match status" value="1"/>
</dbReference>
<dbReference type="Gene3D" id="2.160.10.10">
    <property type="entry name" value="Hexapeptide repeat proteins"/>
    <property type="match status" value="1"/>
</dbReference>
<dbReference type="Gene3D" id="3.90.550.10">
    <property type="entry name" value="Spore Coat Polysaccharide Biosynthesis Protein SpsA, Chain A"/>
    <property type="match status" value="1"/>
</dbReference>
<dbReference type="HAMAP" id="MF_00624">
    <property type="entry name" value="GlgC"/>
    <property type="match status" value="1"/>
</dbReference>
<dbReference type="InterPro" id="IPR011831">
    <property type="entry name" value="ADP-Glc_PPase"/>
</dbReference>
<dbReference type="InterPro" id="IPR005836">
    <property type="entry name" value="ADP_Glu_pyroP_CS"/>
</dbReference>
<dbReference type="InterPro" id="IPR023049">
    <property type="entry name" value="GlgC_bac"/>
</dbReference>
<dbReference type="InterPro" id="IPR056818">
    <property type="entry name" value="GlmU/GlgC-like_hexapep"/>
</dbReference>
<dbReference type="InterPro" id="IPR005835">
    <property type="entry name" value="NTP_transferase_dom"/>
</dbReference>
<dbReference type="InterPro" id="IPR029044">
    <property type="entry name" value="Nucleotide-diphossugar_trans"/>
</dbReference>
<dbReference type="InterPro" id="IPR011004">
    <property type="entry name" value="Trimer_LpxA-like_sf"/>
</dbReference>
<dbReference type="NCBIfam" id="TIGR02091">
    <property type="entry name" value="glgC"/>
    <property type="match status" value="1"/>
</dbReference>
<dbReference type="NCBIfam" id="NF001947">
    <property type="entry name" value="PRK00725.1"/>
    <property type="match status" value="1"/>
</dbReference>
<dbReference type="NCBIfam" id="NF002023">
    <property type="entry name" value="PRK00844.1"/>
    <property type="match status" value="1"/>
</dbReference>
<dbReference type="PANTHER" id="PTHR43523:SF2">
    <property type="entry name" value="GLUCOSE-1-PHOSPHATE ADENYLYLTRANSFERASE"/>
    <property type="match status" value="1"/>
</dbReference>
<dbReference type="PANTHER" id="PTHR43523">
    <property type="entry name" value="GLUCOSE-1-PHOSPHATE ADENYLYLTRANSFERASE-RELATED"/>
    <property type="match status" value="1"/>
</dbReference>
<dbReference type="Pfam" id="PF24894">
    <property type="entry name" value="Hexapep_GlmU"/>
    <property type="match status" value="1"/>
</dbReference>
<dbReference type="Pfam" id="PF00483">
    <property type="entry name" value="NTP_transferase"/>
    <property type="match status" value="1"/>
</dbReference>
<dbReference type="SUPFAM" id="SSF53448">
    <property type="entry name" value="Nucleotide-diphospho-sugar transferases"/>
    <property type="match status" value="1"/>
</dbReference>
<dbReference type="SUPFAM" id="SSF51161">
    <property type="entry name" value="Trimeric LpxA-like enzymes"/>
    <property type="match status" value="1"/>
</dbReference>
<dbReference type="PROSITE" id="PS00808">
    <property type="entry name" value="ADP_GLC_PYROPHOSPH_1"/>
    <property type="match status" value="1"/>
</dbReference>
<dbReference type="PROSITE" id="PS00809">
    <property type="entry name" value="ADP_GLC_PYROPHOSPH_2"/>
    <property type="match status" value="1"/>
</dbReference>
<gene>
    <name evidence="1" type="primary">glgC</name>
    <name type="ordered locus">BAD_0716</name>
</gene>
<proteinExistence type="inferred from homology"/>
<sequence length="414" mass="45609">MAKNPKILSIVLAGGEGTRLMPLTRDRAKPAVPFGGVFRLIDFPLSNLVNSGYMQTVVLTQYKSHSLDRHISTVWRFSPLLGNYVSPVPAQQRLGKHWYLGSADAIYQTINIIEDVQPDIVVIVGADHVYRMDFQQMVQQHIESGAEFTVAGIRQPISQSNQFGVIEVDPDHPNMIKSFQEKPQTTTGLPDDPNSILASMGNYVANTDALFAALSLDEKAEDTKHDMGGDIAPYFAARNEAGVYDFNSNEIPGATPTDHAYWRDVGTLKQFYDAHMDLISYVPEFNLYNTEWPIYTLSGNLPPAKFVHAGRDRLGHATDSIVSPGVIVSGGEVHHSVLSPNVRIHSWSQVVDSILFDGVVVNRRARVYKAILDKNVVLTENSTVGIDTEHDLARGFTVTPEGITVVPKGTVVDD</sequence>